<dbReference type="EMBL" id="CP000250">
    <property type="protein sequence ID" value="ABD07897.1"/>
    <property type="molecule type" value="Genomic_DNA"/>
</dbReference>
<dbReference type="RefSeq" id="WP_011442081.1">
    <property type="nucleotide sequence ID" value="NC_007778.1"/>
</dbReference>
<dbReference type="SMR" id="Q2IV63"/>
<dbReference type="STRING" id="316058.RPB_3201"/>
<dbReference type="KEGG" id="rpb:RPB_3201"/>
<dbReference type="eggNOG" id="COG1671">
    <property type="taxonomic scope" value="Bacteria"/>
</dbReference>
<dbReference type="HOGENOM" id="CLU_106619_2_1_5"/>
<dbReference type="OrthoDB" id="9798918at2"/>
<dbReference type="Proteomes" id="UP000008809">
    <property type="component" value="Chromosome"/>
</dbReference>
<dbReference type="CDD" id="cd18720">
    <property type="entry name" value="PIN_YqxD-like"/>
    <property type="match status" value="1"/>
</dbReference>
<dbReference type="HAMAP" id="MF_00489">
    <property type="entry name" value="UPF0178"/>
    <property type="match status" value="1"/>
</dbReference>
<dbReference type="InterPro" id="IPR003791">
    <property type="entry name" value="UPF0178"/>
</dbReference>
<dbReference type="NCBIfam" id="NF001095">
    <property type="entry name" value="PRK00124.1"/>
    <property type="match status" value="1"/>
</dbReference>
<dbReference type="PANTHER" id="PTHR35146">
    <property type="entry name" value="UPF0178 PROTEIN YAII"/>
    <property type="match status" value="1"/>
</dbReference>
<dbReference type="PANTHER" id="PTHR35146:SF1">
    <property type="entry name" value="UPF0178 PROTEIN YAII"/>
    <property type="match status" value="1"/>
</dbReference>
<dbReference type="Pfam" id="PF02639">
    <property type="entry name" value="DUF188"/>
    <property type="match status" value="1"/>
</dbReference>
<name>Y3201_RHOP2</name>
<gene>
    <name type="ordered locus">RPB_3201</name>
</gene>
<sequence length="164" mass="17544">MTEAAPTRIYVDADACPVKDEIYRVAERHGLPVSVVAGSFIRVPTHPLIERIAAGSGMDAADDWIAERVQPGDIVVTADVPLASRCVKAGAEVLAPNGKPFSEESIGMTLAVRNLMTDLRSSGEITGGPRGFTPRDRSAFLAALDTTIRRIARRRPSPPAQPQT</sequence>
<keyword id="KW-1185">Reference proteome</keyword>
<proteinExistence type="inferred from homology"/>
<feature type="chain" id="PRO_0000241827" description="UPF0178 protein RPB_3201">
    <location>
        <begin position="1"/>
        <end position="164"/>
    </location>
</feature>
<evidence type="ECO:0000255" key="1">
    <source>
        <dbReference type="HAMAP-Rule" id="MF_00489"/>
    </source>
</evidence>
<accession>Q2IV63</accession>
<organism>
    <name type="scientific">Rhodopseudomonas palustris (strain HaA2)</name>
    <dbReference type="NCBI Taxonomy" id="316058"/>
    <lineage>
        <taxon>Bacteria</taxon>
        <taxon>Pseudomonadati</taxon>
        <taxon>Pseudomonadota</taxon>
        <taxon>Alphaproteobacteria</taxon>
        <taxon>Hyphomicrobiales</taxon>
        <taxon>Nitrobacteraceae</taxon>
        <taxon>Rhodopseudomonas</taxon>
    </lineage>
</organism>
<protein>
    <recommendedName>
        <fullName evidence="1">UPF0178 protein RPB_3201</fullName>
    </recommendedName>
</protein>
<reference key="1">
    <citation type="submission" date="2006-01" db="EMBL/GenBank/DDBJ databases">
        <title>Complete sequence of Rhodopseudomonas palustris HaA2.</title>
        <authorList>
            <consortium name="US DOE Joint Genome Institute"/>
            <person name="Copeland A."/>
            <person name="Lucas S."/>
            <person name="Lapidus A."/>
            <person name="Barry K."/>
            <person name="Detter J.C."/>
            <person name="Glavina T."/>
            <person name="Hammon N."/>
            <person name="Israni S."/>
            <person name="Pitluck S."/>
            <person name="Chain P."/>
            <person name="Malfatti S."/>
            <person name="Shin M."/>
            <person name="Vergez L."/>
            <person name="Schmutz J."/>
            <person name="Larimer F."/>
            <person name="Land M."/>
            <person name="Hauser L."/>
            <person name="Pelletier D.A."/>
            <person name="Kyrpides N."/>
            <person name="Anderson I."/>
            <person name="Oda Y."/>
            <person name="Harwood C.S."/>
            <person name="Richardson P."/>
        </authorList>
    </citation>
    <scope>NUCLEOTIDE SEQUENCE [LARGE SCALE GENOMIC DNA]</scope>
    <source>
        <strain>HaA2</strain>
    </source>
</reference>
<comment type="similarity">
    <text evidence="1">Belongs to the UPF0178 family.</text>
</comment>